<protein>
    <recommendedName>
        <fullName>Large cysteine-rich periplasmic protein OmcB</fullName>
        <shortName>Large-CRP</shortName>
    </recommendedName>
    <alternativeName>
        <fullName>60 kDa CRP</fullName>
    </alternativeName>
    <alternativeName>
        <fullName>60 kDa outer membrane protein</fullName>
    </alternativeName>
    <alternativeName>
        <fullName>Cysteine-rich outer membrane protein</fullName>
    </alternativeName>
</protein>
<dbReference type="EMBL" id="AF240773">
    <property type="protein sequence ID" value="AAG60550.1"/>
    <property type="molecule type" value="Genomic_DNA"/>
</dbReference>
<dbReference type="EMBL" id="CR848038">
    <property type="protein sequence ID" value="CAH63639.1"/>
    <property type="molecule type" value="Genomic_DNA"/>
</dbReference>
<dbReference type="RefSeq" id="WP_011096885.1">
    <property type="nucleotide sequence ID" value="NC_004552.2"/>
</dbReference>
<dbReference type="KEGG" id="cab:CAB181"/>
<dbReference type="eggNOG" id="COG1361">
    <property type="taxonomic scope" value="Bacteria"/>
</dbReference>
<dbReference type="HOGENOM" id="CLU_029611_0_0_0"/>
<dbReference type="OrthoDB" id="16744at2"/>
<dbReference type="Proteomes" id="UP000001012">
    <property type="component" value="Chromosome"/>
</dbReference>
<dbReference type="GO" id="GO:0042597">
    <property type="term" value="C:periplasmic space"/>
    <property type="evidence" value="ECO:0007669"/>
    <property type="project" value="UniProtKB-SubCell"/>
</dbReference>
<dbReference type="GO" id="GO:0005201">
    <property type="term" value="F:extracellular matrix structural constituent"/>
    <property type="evidence" value="ECO:0007669"/>
    <property type="project" value="InterPro"/>
</dbReference>
<dbReference type="GO" id="GO:0008360">
    <property type="term" value="P:regulation of cell shape"/>
    <property type="evidence" value="ECO:0007669"/>
    <property type="project" value="UniProtKB-KW"/>
</dbReference>
<dbReference type="InterPro" id="IPR003506">
    <property type="entry name" value="Chlam_OMP6"/>
</dbReference>
<dbReference type="InterPro" id="IPR051172">
    <property type="entry name" value="Chlamydia_OmcB"/>
</dbReference>
<dbReference type="InterPro" id="IPR047589">
    <property type="entry name" value="DUF11_rpt"/>
</dbReference>
<dbReference type="InterPro" id="IPR001434">
    <property type="entry name" value="OmcB-like_DUF11"/>
</dbReference>
<dbReference type="NCBIfam" id="TIGR01451">
    <property type="entry name" value="B_ant_repeat"/>
    <property type="match status" value="1"/>
</dbReference>
<dbReference type="PANTHER" id="PTHR34819">
    <property type="entry name" value="LARGE CYSTEINE-RICH PERIPLASMIC PROTEIN OMCB"/>
    <property type="match status" value="1"/>
</dbReference>
<dbReference type="PANTHER" id="PTHR34819:SF4">
    <property type="entry name" value="LARGE CYSTEINE-RICH PERIPLASMIC PROTEIN OMCB"/>
    <property type="match status" value="1"/>
</dbReference>
<dbReference type="Pfam" id="PF03504">
    <property type="entry name" value="Chlam_OMP6"/>
    <property type="match status" value="1"/>
</dbReference>
<dbReference type="Pfam" id="PF01345">
    <property type="entry name" value="DUF11"/>
    <property type="match status" value="3"/>
</dbReference>
<dbReference type="PRINTS" id="PR01336">
    <property type="entry name" value="CHLAMIDIAOM6"/>
</dbReference>
<feature type="signal peptide" evidence="2">
    <location>
        <begin position="1"/>
        <end position="22"/>
    </location>
</feature>
<feature type="propeptide" id="PRO_0000248862" evidence="2">
    <location>
        <begin position="23"/>
        <end position="40"/>
    </location>
</feature>
<feature type="chain" id="PRO_0000248863" description="Large cysteine-rich periplasmic protein OmcB">
    <location>
        <begin position="41"/>
        <end position="557"/>
    </location>
</feature>
<comment type="function">
    <text evidence="1">In elementary bodies (EBs, the infectious stage, which is able to survive outside the host cell) provides the structural integrity of the outer envelope through disulfide cross-links with the small cysteine-rich protein and the major outer membrane porin. It has been described in publications as the Sarkosyl-insoluble COMC (Chlamydia outer membrane complex), and serves as the functional equivalent of peptidoglycan. It is present but the disulfide bonds are reduced in reticulate bodies (RBs) (By similarity).</text>
</comment>
<comment type="subunit">
    <text evidence="1">Part of a disulfide cross-linked outer membrane complex (COMC) composed of the major outer membrane porin (MOMP), the small cysteine-rich protein (OmcA) and the large cysteine-rich periplasmic protein (OmcB).</text>
</comment>
<comment type="subcellular location">
    <subcellularLocation>
        <location evidence="3">Periplasm</location>
    </subcellularLocation>
</comment>
<comment type="caution">
    <text evidence="3">Was thought to be an outer membrane protein as it is part of a disulfide cross-linked complex that is insoluble in the detergent Sarkosyl; however based on experiments in C.psittaci it is likely to be periplasmic.</text>
</comment>
<sequence>MSKLIRRVVTVLALTSMASSFASGKIEAAAAESLATRFIASTENSNDNVLQATAKKVRFGRNKNQRQEQKHTGAFCDKEFYPCEGGQCQSVDTTQESCYGKMYCVRVNDDCNVEISQAVPEYATVGSPYPIEILAVGKKDCVNVVITQQLPCEVEFVSSDPATTPTSDSKLIWTIDCLGQGEKCKITVWVKPLKEGCCFTAATVCACPELRSYTKCGQPAICIKQEGPECACLRCPVCYKIEVCNTGSAIARNVVVDNPVPDGYTHASGQRVLSFNLGDMRPGDSKCFSVEFCPQKRGKITNVATVSYCGGHKCSANVTTVVNEPCVQVNISGADWSYVCKPVEYTIVVSNLGDLKLYDVVVEDTVPSGATILEAEGAEICCNKAVWCIKEMCPGETLQFKVVAKAQSPGKFTNQVVVKTNSDCGTCTSCAEATTHWKGLAATHMCVIDTNDPICVGENTVYRICVTNRGSAEDTNVSLILKFSKELQPVSSSGPTKGTITGNTVVFDALPKLGSKESVEFSVTLKGIAPGDARGEAILSSDTLTVPVADTENTHVY</sequence>
<evidence type="ECO:0000250" key="1"/>
<evidence type="ECO:0000255" key="2"/>
<evidence type="ECO:0000305" key="3"/>
<name>OMCB_CHLAB</name>
<keyword id="KW-0133">Cell shape</keyword>
<keyword id="KW-1015">Disulfide bond</keyword>
<keyword id="KW-0574">Periplasm</keyword>
<keyword id="KW-0732">Signal</keyword>
<proteinExistence type="inferred from homology"/>
<organism>
    <name type="scientific">Chlamydia abortus (strain DSM 27085 / S26/3)</name>
    <name type="common">Chlamydophila abortus</name>
    <dbReference type="NCBI Taxonomy" id="218497"/>
    <lineage>
        <taxon>Bacteria</taxon>
        <taxon>Pseudomonadati</taxon>
        <taxon>Chlamydiota</taxon>
        <taxon>Chlamydiia</taxon>
        <taxon>Chlamydiales</taxon>
        <taxon>Chlamydiaceae</taxon>
        <taxon>Chlamydia/Chlamydophila group</taxon>
        <taxon>Chlamydia</taxon>
    </lineage>
</organism>
<gene>
    <name type="primary">omcB</name>
    <name type="synonym">cmcB</name>
    <name type="ordered locus">CAB181</name>
</gene>
<accession>Q9AIS7</accession>
<accession>Q5L6T2</accession>
<reference key="1">
    <citation type="journal article" date="2001" name="Int. J. Syst. Evol. Microbiol.">
        <title>Molecular evolution of the Chlamydiaceae.</title>
        <authorList>
            <person name="Bush R.M."/>
            <person name="Everett K.D.E."/>
        </authorList>
    </citation>
    <scope>NUCLEOTIDE SEQUENCE [GENOMIC DNA]</scope>
    <source>
        <strain>EBA</strain>
    </source>
</reference>
<reference key="2">
    <citation type="journal article" date="2005" name="Genome Res.">
        <title>The Chlamydophila abortus genome sequence reveals an array of variable proteins that contribute to interspecies variation.</title>
        <authorList>
            <person name="Thomson N.R."/>
            <person name="Yeats C."/>
            <person name="Bell K."/>
            <person name="Holden M.T.G."/>
            <person name="Bentley S.D."/>
            <person name="Livingstone M."/>
            <person name="Cerdeno-Tarraga A.-M."/>
            <person name="Harris B."/>
            <person name="Doggett J."/>
            <person name="Ormond D."/>
            <person name="Mungall K."/>
            <person name="Clarke K."/>
            <person name="Feltwell T."/>
            <person name="Hance Z."/>
            <person name="Sanders M."/>
            <person name="Quail M.A."/>
            <person name="Price C."/>
            <person name="Barrell B.G."/>
            <person name="Parkhill J."/>
            <person name="Longbottom D."/>
        </authorList>
    </citation>
    <scope>NUCLEOTIDE SEQUENCE [LARGE SCALE GENOMIC DNA]</scope>
    <source>
        <strain>DSM 27085 / S26/3</strain>
    </source>
</reference>